<name>PAGR_BACAN</name>
<dbReference type="EMBL" id="AF031382">
    <property type="protein sequence ID" value="AAB87063.1"/>
    <property type="molecule type" value="Genomic_DNA"/>
</dbReference>
<dbReference type="EMBL" id="AF065404">
    <property type="protein sequence ID" value="AAD32413.1"/>
    <property type="molecule type" value="Genomic_DNA"/>
</dbReference>
<dbReference type="EMBL" id="AE011190">
    <property type="protein sequence ID" value="AAM26111.1"/>
    <property type="molecule type" value="Genomic_DNA"/>
</dbReference>
<dbReference type="EMBL" id="AE017336">
    <property type="protein sequence ID" value="AAT28907.2"/>
    <property type="molecule type" value="Genomic_DNA"/>
</dbReference>
<dbReference type="EMBL" id="AJ413938">
    <property type="protein sequence ID" value="CAC93936.1"/>
    <property type="molecule type" value="Genomic_DNA"/>
</dbReference>
<dbReference type="EMBL" id="AJ413939">
    <property type="protein sequence ID" value="CAC93937.1"/>
    <property type="molecule type" value="Genomic_DNA"/>
</dbReference>
<dbReference type="PIR" id="E59104">
    <property type="entry name" value="E59104"/>
</dbReference>
<dbReference type="RefSeq" id="NP_052805.1">
    <property type="nucleotide sequence ID" value="NC_001496.1"/>
</dbReference>
<dbReference type="RefSeq" id="WP_000215715.1">
    <property type="nucleotide sequence ID" value="NZ_VTZH01000015.1"/>
</dbReference>
<dbReference type="PDB" id="2ZKZ">
    <property type="method" value="X-ray"/>
    <property type="resolution" value="2.00 A"/>
    <property type="chains" value="A/B/C/D=1-99"/>
</dbReference>
<dbReference type="PDBsum" id="2ZKZ"/>
<dbReference type="SMR" id="O31178"/>
<dbReference type="GeneID" id="45025513"/>
<dbReference type="KEGG" id="banh:HYU01_28780"/>
<dbReference type="KEGG" id="bar:GBAA_pXO1_0166"/>
<dbReference type="HOGENOM" id="CLU_097806_6_2_9"/>
<dbReference type="OMA" id="PRARENK"/>
<dbReference type="EvolutionaryTrace" id="O31178"/>
<dbReference type="Proteomes" id="UP000000594">
    <property type="component" value="Plasmid pXO1"/>
</dbReference>
<dbReference type="GO" id="GO:0003677">
    <property type="term" value="F:DNA binding"/>
    <property type="evidence" value="ECO:0007669"/>
    <property type="project" value="UniProtKB-KW"/>
</dbReference>
<dbReference type="GO" id="GO:0003700">
    <property type="term" value="F:DNA-binding transcription factor activity"/>
    <property type="evidence" value="ECO:0007669"/>
    <property type="project" value="InterPro"/>
</dbReference>
<dbReference type="CDD" id="cd00090">
    <property type="entry name" value="HTH_ARSR"/>
    <property type="match status" value="1"/>
</dbReference>
<dbReference type="Gene3D" id="1.10.10.10">
    <property type="entry name" value="Winged helix-like DNA-binding domain superfamily/Winged helix DNA-binding domain"/>
    <property type="match status" value="1"/>
</dbReference>
<dbReference type="InterPro" id="IPR011991">
    <property type="entry name" value="ArsR-like_HTH"/>
</dbReference>
<dbReference type="InterPro" id="IPR001845">
    <property type="entry name" value="HTH_ArsR_DNA-bd_dom"/>
</dbReference>
<dbReference type="InterPro" id="IPR051011">
    <property type="entry name" value="Metal_resp_trans_reg"/>
</dbReference>
<dbReference type="InterPro" id="IPR036388">
    <property type="entry name" value="WH-like_DNA-bd_sf"/>
</dbReference>
<dbReference type="InterPro" id="IPR036390">
    <property type="entry name" value="WH_DNA-bd_sf"/>
</dbReference>
<dbReference type="NCBIfam" id="NF033788">
    <property type="entry name" value="HTH_metalloreg"/>
    <property type="match status" value="1"/>
</dbReference>
<dbReference type="PANTHER" id="PTHR43132">
    <property type="entry name" value="ARSENICAL RESISTANCE OPERON REPRESSOR ARSR-RELATED"/>
    <property type="match status" value="1"/>
</dbReference>
<dbReference type="PANTHER" id="PTHR43132:SF2">
    <property type="entry name" value="ARSENICAL RESISTANCE OPERON REPRESSOR ARSR-RELATED"/>
    <property type="match status" value="1"/>
</dbReference>
<dbReference type="Pfam" id="PF01022">
    <property type="entry name" value="HTH_5"/>
    <property type="match status" value="1"/>
</dbReference>
<dbReference type="SMART" id="SM00418">
    <property type="entry name" value="HTH_ARSR"/>
    <property type="match status" value="1"/>
</dbReference>
<dbReference type="SUPFAM" id="SSF46785">
    <property type="entry name" value="Winged helix' DNA-binding domain"/>
    <property type="match status" value="1"/>
</dbReference>
<dbReference type="PROSITE" id="PS50987">
    <property type="entry name" value="HTH_ARSR_2"/>
    <property type="match status" value="1"/>
</dbReference>
<keyword id="KW-0002">3D-structure</keyword>
<keyword id="KW-0238">DNA-binding</keyword>
<keyword id="KW-0614">Plasmid</keyword>
<keyword id="KW-1185">Reference proteome</keyword>
<keyword id="KW-0678">Repressor</keyword>
<keyword id="KW-0804">Transcription</keyword>
<keyword id="KW-0805">Transcription regulation</keyword>
<gene>
    <name type="primary">pagR</name>
    <name type="synonym">tcrA</name>
    <name type="ordered locus">pXO1-109</name>
    <name type="ordered locus">BXA0166</name>
    <name type="ordered locus">GBAA_pXO1_0166</name>
</gene>
<evidence type="ECO:0000255" key="1">
    <source>
        <dbReference type="PROSITE-ProRule" id="PRU00340"/>
    </source>
</evidence>
<evidence type="ECO:0007829" key="2">
    <source>
        <dbReference type="PDB" id="2ZKZ"/>
    </source>
</evidence>
<protein>
    <recommendedName>
        <fullName>Transcriptional repressor PagR</fullName>
    </recommendedName>
    <alternativeName>
        <fullName>Protective antigen repressor</fullName>
    </alternativeName>
</protein>
<accession>O31178</accession>
<comment type="function">
    <text>Represses the expression of the pagA and atxA genes.</text>
</comment>
<reference key="1">
    <citation type="journal article" date="1999" name="J. Bacteriol.">
        <title>Autogenous regulation of the Bacillus anthracis pag operon.</title>
        <authorList>
            <person name="Hoffmaster A.R."/>
            <person name="Koehler T.M."/>
        </authorList>
    </citation>
    <scope>NUCLEOTIDE SEQUENCE [GENOMIC DNA]</scope>
    <scope>CHARACTERIZATION</scope>
    <source>
        <strain>UM44</strain>
    </source>
</reference>
<reference key="2">
    <citation type="journal article" date="1999" name="J. Bacteriol.">
        <title>Sequence and organization of pXO1, the large Bacillus anthracis plasmid harboring the anthrax toxin genes.</title>
        <authorList>
            <person name="Okinaka R.T."/>
            <person name="Cloud K."/>
            <person name="Hampton O."/>
            <person name="Hoffmaster A.R."/>
            <person name="Hill K.K."/>
            <person name="Keim P."/>
            <person name="Koehler T.M."/>
            <person name="Lamke G."/>
            <person name="Kumano S."/>
            <person name="Mahillon J."/>
            <person name="Manter D."/>
            <person name="Martinez Y."/>
            <person name="Ricke D."/>
            <person name="Svensson R."/>
            <person name="Jackson P.J."/>
        </authorList>
    </citation>
    <scope>NUCLEOTIDE SEQUENCE [LARGE SCALE GENOMIC DNA]</scope>
    <source>
        <strain>Sterne</strain>
    </source>
</reference>
<reference key="3">
    <citation type="journal article" date="2002" name="Science">
        <title>Comparative genome sequencing for discovery of novel polymorphisms in Bacillus anthracis.</title>
        <authorList>
            <person name="Read T.D."/>
            <person name="Salzberg S.L."/>
            <person name="Pop M."/>
            <person name="Shumway M.F."/>
            <person name="Umayam L."/>
            <person name="Jiang L."/>
            <person name="Holtzapple E."/>
            <person name="Busch J.D."/>
            <person name="Smith K.L."/>
            <person name="Schupp J.M."/>
            <person name="Solomon D."/>
            <person name="Keim P."/>
            <person name="Fraser C.M."/>
        </authorList>
    </citation>
    <scope>NUCLEOTIDE SEQUENCE [GENOMIC DNA]</scope>
    <source>
        <strain>Ames / isolate Florida / A2012</strain>
    </source>
</reference>
<reference key="4">
    <citation type="journal article" date="2009" name="J. Bacteriol.">
        <title>The complete genome sequence of Bacillus anthracis Ames 'Ancestor'.</title>
        <authorList>
            <person name="Ravel J."/>
            <person name="Jiang L."/>
            <person name="Stanley S.T."/>
            <person name="Wilson M.R."/>
            <person name="Decker R.S."/>
            <person name="Read T.D."/>
            <person name="Worsham P."/>
            <person name="Keim P.S."/>
            <person name="Salzberg S.L."/>
            <person name="Fraser-Liggett C.M."/>
            <person name="Rasko D.A."/>
        </authorList>
    </citation>
    <scope>NUCLEOTIDE SEQUENCE [LARGE SCALE GENOMIC DNA]</scope>
    <source>
        <strain>Ames ancestor</strain>
    </source>
</reference>
<reference key="5">
    <citation type="journal article" date="2002" name="J. Appl. Microbiol.">
        <title>Sequence analysis of the genes encoding for the major virulence factors of Bacillus anthracis vaccine strain 'Carbosap'.</title>
        <authorList>
            <person name="Adone R."/>
            <person name="Pasquali P."/>
            <person name="La Rosa G."/>
            <person name="Marianelli C."/>
            <person name="Muscillo M."/>
            <person name="Fasanella A."/>
            <person name="Francia M."/>
            <person name="Ciuchini F."/>
        </authorList>
    </citation>
    <scope>NUCLEOTIDE SEQUENCE [GENOMIC DNA]</scope>
    <source>
        <strain>Carbosap</strain>
        <strain>Ferrara</strain>
    </source>
</reference>
<reference key="6">
    <citation type="journal article" date="1999" name="J. Appl. Microbiol.">
        <title>Control of virulence gene expression in Bacillus anthracis.</title>
        <authorList>
            <person name="Hoffmaster A.R."/>
            <person name="Koehler T.M."/>
        </authorList>
    </citation>
    <scope>CHARACTERIZATION</scope>
</reference>
<organism>
    <name type="scientific">Bacillus anthracis</name>
    <dbReference type="NCBI Taxonomy" id="1392"/>
    <lineage>
        <taxon>Bacteria</taxon>
        <taxon>Bacillati</taxon>
        <taxon>Bacillota</taxon>
        <taxon>Bacilli</taxon>
        <taxon>Bacillales</taxon>
        <taxon>Bacillaceae</taxon>
        <taxon>Bacillus</taxon>
        <taxon>Bacillus cereus group</taxon>
    </lineage>
</organism>
<proteinExistence type="evidence at protein level"/>
<sequence>MTVFVDHKIEYMSLEDDAELLKTMAHPMRLKIVNELYKHKALNVTQIIQILKLPQSTVSQHLCKMRGKVLKRNRQGLEIYYSINNPKVEGIIKLLNPIQ</sequence>
<geneLocation type="plasmid">
    <name>pXO1</name>
</geneLocation>
<feature type="chain" id="PRO_0000160625" description="Transcriptional repressor PagR">
    <location>
        <begin position="1"/>
        <end position="99"/>
    </location>
</feature>
<feature type="domain" description="HTH arsR-type" evidence="1">
    <location>
        <begin position="9"/>
        <end position="99"/>
    </location>
</feature>
<feature type="DNA-binding region" description="H-T-H motif" evidence="1">
    <location>
        <begin position="43"/>
        <end position="62"/>
    </location>
</feature>
<feature type="helix" evidence="2">
    <location>
        <begin position="14"/>
        <end position="24"/>
    </location>
</feature>
<feature type="helix" evidence="2">
    <location>
        <begin position="27"/>
        <end position="39"/>
    </location>
</feature>
<feature type="helix" evidence="2">
    <location>
        <begin position="44"/>
        <end position="51"/>
    </location>
</feature>
<feature type="helix" evidence="2">
    <location>
        <begin position="55"/>
        <end position="65"/>
    </location>
</feature>
<feature type="turn" evidence="2">
    <location>
        <begin position="66"/>
        <end position="68"/>
    </location>
</feature>
<feature type="strand" evidence="2">
    <location>
        <begin position="71"/>
        <end position="75"/>
    </location>
</feature>
<feature type="strand" evidence="2">
    <location>
        <begin position="78"/>
        <end position="82"/>
    </location>
</feature>
<feature type="helix" evidence="2">
    <location>
        <begin position="86"/>
        <end position="95"/>
    </location>
</feature>